<name>AKH1A_AGRIP</name>
<feature type="signal peptide" evidence="2">
    <location>
        <begin position="1"/>
        <end position="20"/>
    </location>
</feature>
<feature type="peptide" id="PRO_0000444169" description="Adipokinetic hormone 1" evidence="3">
    <location>
        <begin position="21"/>
        <end position="30"/>
    </location>
</feature>
<feature type="propeptide" id="PRO_0000444170" evidence="5">
    <location>
        <begin position="34"/>
        <end position="68"/>
    </location>
</feature>
<feature type="modified residue" description="Pyrrolidone carboxylic acid" evidence="3">
    <location>
        <position position="21"/>
    </location>
</feature>
<feature type="modified residue" description="Glycine amide" evidence="3">
    <location>
        <position position="30"/>
    </location>
</feature>
<organism evidence="4">
    <name type="scientific">Agrotis ipsilon</name>
    <name type="common">Black cutworm moth</name>
    <dbReference type="NCBI Taxonomy" id="56364"/>
    <lineage>
        <taxon>Eukaryota</taxon>
        <taxon>Metazoa</taxon>
        <taxon>Ecdysozoa</taxon>
        <taxon>Arthropoda</taxon>
        <taxon>Hexapoda</taxon>
        <taxon>Insecta</taxon>
        <taxon>Pterygota</taxon>
        <taxon>Neoptera</taxon>
        <taxon>Endopterygota</taxon>
        <taxon>Lepidoptera</taxon>
        <taxon>Glossata</taxon>
        <taxon>Ditrysia</taxon>
        <taxon>Noctuoidea</taxon>
        <taxon>Noctuidae</taxon>
        <taxon>Noctuinae</taxon>
        <taxon>Noctuini</taxon>
        <taxon>Agrotis</taxon>
    </lineage>
</organism>
<accession>C0HL91</accession>
<accession>C0HKR0</accession>
<keyword id="KW-0027">Amidation</keyword>
<keyword id="KW-0165">Cleavage on pair of basic residues</keyword>
<keyword id="KW-0903">Direct protein sequencing</keyword>
<keyword id="KW-0372">Hormone</keyword>
<keyword id="KW-0527">Neuropeptide</keyword>
<keyword id="KW-0873">Pyrrolidone carboxylic acid</keyword>
<keyword id="KW-0964">Secreted</keyword>
<keyword id="KW-0732">Signal</keyword>
<comment type="function">
    <text evidence="1">This hormone, released from cells in the corpora cardiaca, causes release of diglycerides from the fat body and stimulation of muscles to use these diglycerides as an energy source during energy-demanding processes.</text>
</comment>
<comment type="subcellular location">
    <subcellularLocation>
        <location evidence="5">Secreted</location>
    </subcellularLocation>
</comment>
<comment type="tissue specificity">
    <text evidence="3">Expressed in antennal lobe (AL), corpora cardiaca (CC), corpora allata (CA) and gnathal ganglion (GNG) (at protein level). Expression in CC and CA detected in all animals, expression in GNG in some animals and in AL in few animals (at protein level).</text>
</comment>
<comment type="mass spectrometry"/>
<comment type="similarity">
    <text evidence="5">Belongs to the AKH/HRTH/RPCH family.</text>
</comment>
<comment type="caution">
    <text evidence="5">The mature peptide AKH-1 is also encoded by another precursor (AC C0HL92).</text>
</comment>
<comment type="caution">
    <text evidence="5">Further mature peptides might exist.</text>
</comment>
<proteinExistence type="evidence at protein level"/>
<reference evidence="5" key="1">
    <citation type="journal article" date="2018" name="J. Proteome Res.">
        <title>Mating-induced differential peptidomics of neuropeptides and protein hormones in Agrotis ipsilon moths.</title>
        <authorList>
            <person name="Diesner M."/>
            <person name="Gallot A."/>
            <person name="Binz H."/>
            <person name="Gaertner C."/>
            <person name="Vitecek S."/>
            <person name="Kahnt J."/>
            <person name="Schachtner J."/>
            <person name="Jacquin-Joly E."/>
            <person name="Gadenne C."/>
        </authorList>
    </citation>
    <scope>NUCLEOTIDE SEQUENCE [MRNA]</scope>
    <scope>PROTEIN SEQUENCE OF 21-30</scope>
    <scope>TISSUE SPECIFICITY</scope>
    <scope>MASS SPECTROMETRY</scope>
    <scope>IDENTIFICATION BY MASS SPECTROMETRY</scope>
    <scope>AMIDATION AT GLY-30</scope>
    <scope>PYROGLUTAMATE FORMATION AT GLN-21</scope>
</reference>
<sequence>MNYVSIFVLIVACLCVLADAQLTFTSSWGGGKRGAVAATMSCRSEETIAAIYKLIQNEAERLLLCQKP</sequence>
<evidence type="ECO:0000250" key="1">
    <source>
        <dbReference type="UniProtKB" id="P55319"/>
    </source>
</evidence>
<evidence type="ECO:0000255" key="2"/>
<evidence type="ECO:0000269" key="3">
    <source>
    </source>
</evidence>
<evidence type="ECO:0000303" key="4">
    <source>
    </source>
</evidence>
<evidence type="ECO:0000305" key="5"/>
<protein>
    <recommendedName>
        <fullName evidence="1">Adipokinetic prohormone type 1</fullName>
    </recommendedName>
    <component>
        <recommendedName>
            <fullName evidence="4">Adipokinetic hormone 1</fullName>
            <shortName evidence="4">AKH-1</shortName>
        </recommendedName>
    </component>
</protein>
<dbReference type="GO" id="GO:0005576">
    <property type="term" value="C:extracellular region"/>
    <property type="evidence" value="ECO:0007669"/>
    <property type="project" value="UniProtKB-SubCell"/>
</dbReference>
<dbReference type="GO" id="GO:0005179">
    <property type="term" value="F:hormone activity"/>
    <property type="evidence" value="ECO:0007669"/>
    <property type="project" value="UniProtKB-KW"/>
</dbReference>
<dbReference type="GO" id="GO:0007218">
    <property type="term" value="P:neuropeptide signaling pathway"/>
    <property type="evidence" value="ECO:0007669"/>
    <property type="project" value="UniProtKB-KW"/>
</dbReference>
<dbReference type="InterPro" id="IPR002047">
    <property type="entry name" value="Adipokinetic_hormone_CS"/>
</dbReference>
<dbReference type="InterPro" id="IPR010475">
    <property type="entry name" value="AKH/RPCH_hormone"/>
</dbReference>
<dbReference type="Pfam" id="PF06377">
    <property type="entry name" value="Adipokin_hormo"/>
    <property type="match status" value="1"/>
</dbReference>
<dbReference type="PROSITE" id="PS00256">
    <property type="entry name" value="AKH"/>
    <property type="match status" value="1"/>
</dbReference>